<comment type="function">
    <text evidence="1">Produces ATP from ADP in the presence of a proton gradient across the membrane. The gamma chain is believed to be important in regulating ATPase activity and the flow of protons through the CF(0) complex.</text>
</comment>
<comment type="subunit">
    <text evidence="1">F-type ATPases have 2 components, CF(1) - the catalytic core - and CF(0) - the membrane proton channel. CF(1) has five subunits: alpha(3), beta(3), gamma(1), delta(1), epsilon(1). CF(0) has three main subunits: a, b and c.</text>
</comment>
<comment type="subcellular location">
    <subcellularLocation>
        <location evidence="1">Cell inner membrane</location>
        <topology evidence="1">Peripheral membrane protein</topology>
    </subcellularLocation>
</comment>
<comment type="similarity">
    <text evidence="1">Belongs to the ATPase gamma chain family.</text>
</comment>
<gene>
    <name evidence="1" type="primary">atpG</name>
    <name type="ordered locus">SFV_3759</name>
</gene>
<reference key="1">
    <citation type="journal article" date="2006" name="BMC Genomics">
        <title>Complete genome sequence of Shigella flexneri 5b and comparison with Shigella flexneri 2a.</title>
        <authorList>
            <person name="Nie H."/>
            <person name="Yang F."/>
            <person name="Zhang X."/>
            <person name="Yang J."/>
            <person name="Chen L."/>
            <person name="Wang J."/>
            <person name="Xiong Z."/>
            <person name="Peng J."/>
            <person name="Sun L."/>
            <person name="Dong J."/>
            <person name="Xue Y."/>
            <person name="Xu X."/>
            <person name="Chen S."/>
            <person name="Yao Z."/>
            <person name="Shen Y."/>
            <person name="Jin Q."/>
        </authorList>
    </citation>
    <scope>NUCLEOTIDE SEQUENCE [LARGE SCALE GENOMIC DNA]</scope>
    <source>
        <strain>8401</strain>
    </source>
</reference>
<evidence type="ECO:0000255" key="1">
    <source>
        <dbReference type="HAMAP-Rule" id="MF_00815"/>
    </source>
</evidence>
<feature type="chain" id="PRO_1000053337" description="ATP synthase gamma chain">
    <location>
        <begin position="1"/>
        <end position="287"/>
    </location>
</feature>
<organism>
    <name type="scientific">Shigella flexneri serotype 5b (strain 8401)</name>
    <dbReference type="NCBI Taxonomy" id="373384"/>
    <lineage>
        <taxon>Bacteria</taxon>
        <taxon>Pseudomonadati</taxon>
        <taxon>Pseudomonadota</taxon>
        <taxon>Gammaproteobacteria</taxon>
        <taxon>Enterobacterales</taxon>
        <taxon>Enterobacteriaceae</taxon>
        <taxon>Shigella</taxon>
    </lineage>
</organism>
<dbReference type="EMBL" id="CP000266">
    <property type="protein sequence ID" value="ABF05772.1"/>
    <property type="molecule type" value="Genomic_DNA"/>
</dbReference>
<dbReference type="RefSeq" id="WP_000896498.1">
    <property type="nucleotide sequence ID" value="NC_008258.1"/>
</dbReference>
<dbReference type="SMR" id="Q0SYU3"/>
<dbReference type="GeneID" id="93778234"/>
<dbReference type="KEGG" id="sfv:SFV_3759"/>
<dbReference type="HOGENOM" id="CLU_050669_0_1_6"/>
<dbReference type="Proteomes" id="UP000000659">
    <property type="component" value="Chromosome"/>
</dbReference>
<dbReference type="GO" id="GO:0005886">
    <property type="term" value="C:plasma membrane"/>
    <property type="evidence" value="ECO:0007669"/>
    <property type="project" value="UniProtKB-SubCell"/>
</dbReference>
<dbReference type="GO" id="GO:0045259">
    <property type="term" value="C:proton-transporting ATP synthase complex"/>
    <property type="evidence" value="ECO:0007669"/>
    <property type="project" value="UniProtKB-KW"/>
</dbReference>
<dbReference type="GO" id="GO:0005524">
    <property type="term" value="F:ATP binding"/>
    <property type="evidence" value="ECO:0007669"/>
    <property type="project" value="UniProtKB-UniRule"/>
</dbReference>
<dbReference type="GO" id="GO:0046933">
    <property type="term" value="F:proton-transporting ATP synthase activity, rotational mechanism"/>
    <property type="evidence" value="ECO:0007669"/>
    <property type="project" value="UniProtKB-UniRule"/>
</dbReference>
<dbReference type="GO" id="GO:0042777">
    <property type="term" value="P:proton motive force-driven plasma membrane ATP synthesis"/>
    <property type="evidence" value="ECO:0007669"/>
    <property type="project" value="UniProtKB-UniRule"/>
</dbReference>
<dbReference type="CDD" id="cd12151">
    <property type="entry name" value="F1-ATPase_gamma"/>
    <property type="match status" value="1"/>
</dbReference>
<dbReference type="FunFam" id="1.10.287.80:FF:000005">
    <property type="entry name" value="ATP synthase gamma chain"/>
    <property type="match status" value="2"/>
</dbReference>
<dbReference type="FunFam" id="3.40.1380.10:FF:000001">
    <property type="entry name" value="ATP synthase gamma chain"/>
    <property type="match status" value="1"/>
</dbReference>
<dbReference type="Gene3D" id="3.40.1380.10">
    <property type="match status" value="1"/>
</dbReference>
<dbReference type="Gene3D" id="1.10.287.80">
    <property type="entry name" value="ATP synthase, gamma subunit, helix hairpin domain"/>
    <property type="match status" value="1"/>
</dbReference>
<dbReference type="HAMAP" id="MF_00815">
    <property type="entry name" value="ATP_synth_gamma_bact"/>
    <property type="match status" value="1"/>
</dbReference>
<dbReference type="InterPro" id="IPR035968">
    <property type="entry name" value="ATP_synth_F1_ATPase_gsu"/>
</dbReference>
<dbReference type="InterPro" id="IPR000131">
    <property type="entry name" value="ATP_synth_F1_gsu"/>
</dbReference>
<dbReference type="InterPro" id="IPR023632">
    <property type="entry name" value="ATP_synth_F1_gsu_CS"/>
</dbReference>
<dbReference type="NCBIfam" id="TIGR01146">
    <property type="entry name" value="ATPsyn_F1gamma"/>
    <property type="match status" value="1"/>
</dbReference>
<dbReference type="NCBIfam" id="NF004144">
    <property type="entry name" value="PRK05621.1-1"/>
    <property type="match status" value="1"/>
</dbReference>
<dbReference type="PANTHER" id="PTHR11693">
    <property type="entry name" value="ATP SYNTHASE GAMMA CHAIN"/>
    <property type="match status" value="1"/>
</dbReference>
<dbReference type="PANTHER" id="PTHR11693:SF22">
    <property type="entry name" value="ATP SYNTHASE SUBUNIT GAMMA, MITOCHONDRIAL"/>
    <property type="match status" value="1"/>
</dbReference>
<dbReference type="Pfam" id="PF00231">
    <property type="entry name" value="ATP-synt"/>
    <property type="match status" value="1"/>
</dbReference>
<dbReference type="PRINTS" id="PR00126">
    <property type="entry name" value="ATPASEGAMMA"/>
</dbReference>
<dbReference type="SUPFAM" id="SSF52943">
    <property type="entry name" value="ATP synthase (F1-ATPase), gamma subunit"/>
    <property type="match status" value="1"/>
</dbReference>
<dbReference type="PROSITE" id="PS00153">
    <property type="entry name" value="ATPASE_GAMMA"/>
    <property type="match status" value="1"/>
</dbReference>
<name>ATPG_SHIF8</name>
<proteinExistence type="inferred from homology"/>
<protein>
    <recommendedName>
        <fullName evidence="1">ATP synthase gamma chain</fullName>
    </recommendedName>
    <alternativeName>
        <fullName evidence="1">ATP synthase F1 sector gamma subunit</fullName>
    </alternativeName>
    <alternativeName>
        <fullName evidence="1">F-ATPase gamma subunit</fullName>
    </alternativeName>
</protein>
<accession>Q0SYU3</accession>
<keyword id="KW-0066">ATP synthesis</keyword>
<keyword id="KW-0997">Cell inner membrane</keyword>
<keyword id="KW-1003">Cell membrane</keyword>
<keyword id="KW-0139">CF(1)</keyword>
<keyword id="KW-0375">Hydrogen ion transport</keyword>
<keyword id="KW-0406">Ion transport</keyword>
<keyword id="KW-0472">Membrane</keyword>
<keyword id="KW-0813">Transport</keyword>
<sequence length="287" mass="31577">MAGAKEIRSKIASVQNTQKITKAMEMVAASKMRKSQDRMAASRPYAETMRKVIGHLAHGNLEYKHPYLEDRDVKRVGYLVVSTDRGLCGGLNINLFKKLLAEMKTWTDKGVQCDLAMIGSKGVSFFNSVGGNVVAQVTGMGDNPSLSELIGPVKVMLQAYDEGRLDKLYIVSNKFINTMSQVPTISQLLPLPASDDDDLKHKSWDYLYEPDPKALLDTLLRRYVESQVYQGVVENLASEQAARMVAMKAATDNGGSLIKELQLVYNKARQASITQELTEIVSGAAAV</sequence>